<reference key="1">
    <citation type="journal article" date="2006" name="Proc. Natl. Acad. Sci. U.S.A.">
        <title>Comparative genomics of the lactic acid bacteria.</title>
        <authorList>
            <person name="Makarova K.S."/>
            <person name="Slesarev A."/>
            <person name="Wolf Y.I."/>
            <person name="Sorokin A."/>
            <person name="Mirkin B."/>
            <person name="Koonin E.V."/>
            <person name="Pavlov A."/>
            <person name="Pavlova N."/>
            <person name="Karamychev V."/>
            <person name="Polouchine N."/>
            <person name="Shakhova V."/>
            <person name="Grigoriev I."/>
            <person name="Lou Y."/>
            <person name="Rohksar D."/>
            <person name="Lucas S."/>
            <person name="Huang K."/>
            <person name="Goodstein D.M."/>
            <person name="Hawkins T."/>
            <person name="Plengvidhya V."/>
            <person name="Welker D."/>
            <person name="Hughes J."/>
            <person name="Goh Y."/>
            <person name="Benson A."/>
            <person name="Baldwin K."/>
            <person name="Lee J.-H."/>
            <person name="Diaz-Muniz I."/>
            <person name="Dosti B."/>
            <person name="Smeianov V."/>
            <person name="Wechter W."/>
            <person name="Barabote R."/>
            <person name="Lorca G."/>
            <person name="Altermann E."/>
            <person name="Barrangou R."/>
            <person name="Ganesan B."/>
            <person name="Xie Y."/>
            <person name="Rawsthorne H."/>
            <person name="Tamir D."/>
            <person name="Parker C."/>
            <person name="Breidt F."/>
            <person name="Broadbent J.R."/>
            <person name="Hutkins R."/>
            <person name="O'Sullivan D."/>
            <person name="Steele J."/>
            <person name="Unlu G."/>
            <person name="Saier M.H. Jr."/>
            <person name="Klaenhammer T."/>
            <person name="Richardson P."/>
            <person name="Kozyavkin S."/>
            <person name="Weimer B.C."/>
            <person name="Mills D.A."/>
        </authorList>
    </citation>
    <scope>NUCLEOTIDE SEQUENCE [LARGE SCALE GENOMIC DNA]</scope>
    <source>
        <strain>ATCC 25745 / CCUG 21536 / LMG 10740 / 183-1w</strain>
    </source>
</reference>
<proteinExistence type="inferred from homology"/>
<feature type="chain" id="PRO_1000007296" description="Large ribosomal subunit protein bL28">
    <location>
        <begin position="1"/>
        <end position="61"/>
    </location>
</feature>
<feature type="region of interest" description="Disordered" evidence="2">
    <location>
        <begin position="1"/>
        <end position="26"/>
    </location>
</feature>
<keyword id="KW-0687">Ribonucleoprotein</keyword>
<keyword id="KW-0689">Ribosomal protein</keyword>
<comment type="similarity">
    <text evidence="1">Belongs to the bacterial ribosomal protein bL28 family.</text>
</comment>
<sequence>MAKDFVTGKHTRFGNTRSHALNHSRRSWKPNLQKVRILVDGKPKRVWVSARALKSGKVTRV</sequence>
<evidence type="ECO:0000255" key="1">
    <source>
        <dbReference type="HAMAP-Rule" id="MF_00373"/>
    </source>
</evidence>
<evidence type="ECO:0000256" key="2">
    <source>
        <dbReference type="SAM" id="MobiDB-lite"/>
    </source>
</evidence>
<evidence type="ECO:0000305" key="3"/>
<gene>
    <name evidence="1" type="primary">rpmB</name>
    <name type="ordered locus">PEPE_0836</name>
</gene>
<accession>Q03FX6</accession>
<dbReference type="EMBL" id="CP000422">
    <property type="protein sequence ID" value="ABJ67896.1"/>
    <property type="molecule type" value="Genomic_DNA"/>
</dbReference>
<dbReference type="RefSeq" id="WP_011673291.1">
    <property type="nucleotide sequence ID" value="NC_008525.1"/>
</dbReference>
<dbReference type="SMR" id="Q03FX6"/>
<dbReference type="STRING" id="278197.PEPE_0836"/>
<dbReference type="GeneID" id="33062681"/>
<dbReference type="KEGG" id="ppe:PEPE_0836"/>
<dbReference type="eggNOG" id="COG0227">
    <property type="taxonomic scope" value="Bacteria"/>
</dbReference>
<dbReference type="HOGENOM" id="CLU_064548_7_1_9"/>
<dbReference type="OrthoDB" id="9805609at2"/>
<dbReference type="Proteomes" id="UP000000773">
    <property type="component" value="Chromosome"/>
</dbReference>
<dbReference type="GO" id="GO:1990904">
    <property type="term" value="C:ribonucleoprotein complex"/>
    <property type="evidence" value="ECO:0007669"/>
    <property type="project" value="UniProtKB-KW"/>
</dbReference>
<dbReference type="GO" id="GO:0005840">
    <property type="term" value="C:ribosome"/>
    <property type="evidence" value="ECO:0007669"/>
    <property type="project" value="UniProtKB-KW"/>
</dbReference>
<dbReference type="GO" id="GO:0003735">
    <property type="term" value="F:structural constituent of ribosome"/>
    <property type="evidence" value="ECO:0007669"/>
    <property type="project" value="InterPro"/>
</dbReference>
<dbReference type="GO" id="GO:0006412">
    <property type="term" value="P:translation"/>
    <property type="evidence" value="ECO:0007669"/>
    <property type="project" value="UniProtKB-UniRule"/>
</dbReference>
<dbReference type="Gene3D" id="2.30.170.40">
    <property type="entry name" value="Ribosomal protein L28/L24"/>
    <property type="match status" value="1"/>
</dbReference>
<dbReference type="HAMAP" id="MF_00373">
    <property type="entry name" value="Ribosomal_bL28"/>
    <property type="match status" value="1"/>
</dbReference>
<dbReference type="InterPro" id="IPR050096">
    <property type="entry name" value="Bacterial_rp_bL28"/>
</dbReference>
<dbReference type="InterPro" id="IPR026569">
    <property type="entry name" value="Ribosomal_bL28"/>
</dbReference>
<dbReference type="InterPro" id="IPR034704">
    <property type="entry name" value="Ribosomal_bL28/bL31-like_sf"/>
</dbReference>
<dbReference type="InterPro" id="IPR001383">
    <property type="entry name" value="Ribosomal_bL28_bact-type"/>
</dbReference>
<dbReference type="InterPro" id="IPR037147">
    <property type="entry name" value="Ribosomal_bL28_sf"/>
</dbReference>
<dbReference type="NCBIfam" id="TIGR00009">
    <property type="entry name" value="L28"/>
    <property type="match status" value="1"/>
</dbReference>
<dbReference type="PANTHER" id="PTHR39080">
    <property type="entry name" value="50S RIBOSOMAL PROTEIN L28"/>
    <property type="match status" value="1"/>
</dbReference>
<dbReference type="PANTHER" id="PTHR39080:SF1">
    <property type="entry name" value="LARGE RIBOSOMAL SUBUNIT PROTEIN BL28A"/>
    <property type="match status" value="1"/>
</dbReference>
<dbReference type="Pfam" id="PF00830">
    <property type="entry name" value="Ribosomal_L28"/>
    <property type="match status" value="1"/>
</dbReference>
<dbReference type="SUPFAM" id="SSF143800">
    <property type="entry name" value="L28p-like"/>
    <property type="match status" value="1"/>
</dbReference>
<name>RL28_PEDPA</name>
<organism>
    <name type="scientific">Pediococcus pentosaceus (strain ATCC 25745 / CCUG 21536 / LMG 10740 / 183-1w)</name>
    <dbReference type="NCBI Taxonomy" id="278197"/>
    <lineage>
        <taxon>Bacteria</taxon>
        <taxon>Bacillati</taxon>
        <taxon>Bacillota</taxon>
        <taxon>Bacilli</taxon>
        <taxon>Lactobacillales</taxon>
        <taxon>Lactobacillaceae</taxon>
        <taxon>Pediococcus</taxon>
    </lineage>
</organism>
<protein>
    <recommendedName>
        <fullName evidence="1">Large ribosomal subunit protein bL28</fullName>
    </recommendedName>
    <alternativeName>
        <fullName evidence="3">50S ribosomal protein L28</fullName>
    </alternativeName>
</protein>